<dbReference type="EC" id="5.6.1.7" evidence="1"/>
<dbReference type="EMBL" id="AF481102">
    <property type="protein sequence ID" value="AAM75978.1"/>
    <property type="molecule type" value="Genomic_DNA"/>
</dbReference>
<dbReference type="SMR" id="Q8KTS0"/>
<dbReference type="STRING" id="1053648.TCP_023"/>
<dbReference type="GO" id="GO:0005737">
    <property type="term" value="C:cytoplasm"/>
    <property type="evidence" value="ECO:0007669"/>
    <property type="project" value="UniProtKB-SubCell"/>
</dbReference>
<dbReference type="GO" id="GO:0005524">
    <property type="term" value="F:ATP binding"/>
    <property type="evidence" value="ECO:0007669"/>
    <property type="project" value="UniProtKB-UniRule"/>
</dbReference>
<dbReference type="GO" id="GO:0140662">
    <property type="term" value="F:ATP-dependent protein folding chaperone"/>
    <property type="evidence" value="ECO:0007669"/>
    <property type="project" value="InterPro"/>
</dbReference>
<dbReference type="GO" id="GO:0016853">
    <property type="term" value="F:isomerase activity"/>
    <property type="evidence" value="ECO:0007669"/>
    <property type="project" value="UniProtKB-KW"/>
</dbReference>
<dbReference type="GO" id="GO:0051082">
    <property type="term" value="F:unfolded protein binding"/>
    <property type="evidence" value="ECO:0007669"/>
    <property type="project" value="UniProtKB-UniRule"/>
</dbReference>
<dbReference type="GO" id="GO:0042026">
    <property type="term" value="P:protein refolding"/>
    <property type="evidence" value="ECO:0007669"/>
    <property type="project" value="UniProtKB-UniRule"/>
</dbReference>
<dbReference type="CDD" id="cd03344">
    <property type="entry name" value="GroEL"/>
    <property type="match status" value="1"/>
</dbReference>
<dbReference type="FunFam" id="3.50.7.10:FF:000001">
    <property type="entry name" value="60 kDa chaperonin"/>
    <property type="match status" value="1"/>
</dbReference>
<dbReference type="Gene3D" id="3.50.7.10">
    <property type="entry name" value="GroEL"/>
    <property type="match status" value="1"/>
</dbReference>
<dbReference type="Gene3D" id="1.10.560.10">
    <property type="entry name" value="GroEL-like equatorial domain"/>
    <property type="match status" value="1"/>
</dbReference>
<dbReference type="Gene3D" id="3.30.260.10">
    <property type="entry name" value="TCP-1-like chaperonin intermediate domain"/>
    <property type="match status" value="1"/>
</dbReference>
<dbReference type="HAMAP" id="MF_00600">
    <property type="entry name" value="CH60"/>
    <property type="match status" value="1"/>
</dbReference>
<dbReference type="InterPro" id="IPR018370">
    <property type="entry name" value="Chaperonin_Cpn60_CS"/>
</dbReference>
<dbReference type="InterPro" id="IPR001844">
    <property type="entry name" value="Cpn60/GroEL"/>
</dbReference>
<dbReference type="InterPro" id="IPR002423">
    <property type="entry name" value="Cpn60/GroEL/TCP-1"/>
</dbReference>
<dbReference type="InterPro" id="IPR027409">
    <property type="entry name" value="GroEL-like_apical_dom_sf"/>
</dbReference>
<dbReference type="InterPro" id="IPR027413">
    <property type="entry name" value="GROEL-like_equatorial_sf"/>
</dbReference>
<dbReference type="InterPro" id="IPR027410">
    <property type="entry name" value="TCP-1-like_intermed_sf"/>
</dbReference>
<dbReference type="NCBIfam" id="TIGR02348">
    <property type="entry name" value="GroEL"/>
    <property type="match status" value="1"/>
</dbReference>
<dbReference type="NCBIfam" id="NF000592">
    <property type="entry name" value="PRK00013.1"/>
    <property type="match status" value="1"/>
</dbReference>
<dbReference type="NCBIfam" id="NF009487">
    <property type="entry name" value="PRK12849.1"/>
    <property type="match status" value="1"/>
</dbReference>
<dbReference type="NCBIfam" id="NF009488">
    <property type="entry name" value="PRK12850.1"/>
    <property type="match status" value="1"/>
</dbReference>
<dbReference type="NCBIfam" id="NF009489">
    <property type="entry name" value="PRK12851.1"/>
    <property type="match status" value="1"/>
</dbReference>
<dbReference type="PANTHER" id="PTHR45633">
    <property type="entry name" value="60 KDA HEAT SHOCK PROTEIN, MITOCHONDRIAL"/>
    <property type="match status" value="1"/>
</dbReference>
<dbReference type="Pfam" id="PF00118">
    <property type="entry name" value="Cpn60_TCP1"/>
    <property type="match status" value="1"/>
</dbReference>
<dbReference type="PRINTS" id="PR00298">
    <property type="entry name" value="CHAPERONIN60"/>
</dbReference>
<dbReference type="SUPFAM" id="SSF52029">
    <property type="entry name" value="GroEL apical domain-like"/>
    <property type="match status" value="1"/>
</dbReference>
<dbReference type="SUPFAM" id="SSF48592">
    <property type="entry name" value="GroEL equatorial domain-like"/>
    <property type="match status" value="1"/>
</dbReference>
<dbReference type="SUPFAM" id="SSF54849">
    <property type="entry name" value="GroEL-intermediate domain like"/>
    <property type="match status" value="1"/>
</dbReference>
<dbReference type="PROSITE" id="PS00296">
    <property type="entry name" value="CHAPERONINS_CPN60"/>
    <property type="match status" value="1"/>
</dbReference>
<gene>
    <name evidence="1" type="primary">groEL</name>
    <name evidence="1" type="synonym">groL</name>
</gene>
<name>CH60_TREPR</name>
<evidence type="ECO:0000255" key="1">
    <source>
        <dbReference type="HAMAP-Rule" id="MF_00600"/>
    </source>
</evidence>
<accession>Q8KTS0</accession>
<proteinExistence type="inferred from homology"/>
<feature type="chain" id="PRO_0000063325" description="Chaperonin GroEL">
    <location>
        <begin position="1"/>
        <end position="542"/>
    </location>
</feature>
<feature type="binding site" evidence="1">
    <location>
        <begin position="30"/>
        <end position="33"/>
    </location>
    <ligand>
        <name>ATP</name>
        <dbReference type="ChEBI" id="CHEBI:30616"/>
    </ligand>
</feature>
<feature type="binding site" evidence="1">
    <location>
        <position position="51"/>
    </location>
    <ligand>
        <name>ATP</name>
        <dbReference type="ChEBI" id="CHEBI:30616"/>
    </ligand>
</feature>
<feature type="binding site" evidence="1">
    <location>
        <begin position="87"/>
        <end position="91"/>
    </location>
    <ligand>
        <name>ATP</name>
        <dbReference type="ChEBI" id="CHEBI:30616"/>
    </ligand>
</feature>
<feature type="binding site" evidence="1">
    <location>
        <position position="415"/>
    </location>
    <ligand>
        <name>ATP</name>
        <dbReference type="ChEBI" id="CHEBI:30616"/>
    </ligand>
</feature>
<feature type="binding site" evidence="1">
    <location>
        <begin position="480"/>
        <end position="482"/>
    </location>
    <ligand>
        <name>ATP</name>
        <dbReference type="ChEBI" id="CHEBI:30616"/>
    </ligand>
</feature>
<feature type="binding site" evidence="1">
    <location>
        <position position="496"/>
    </location>
    <ligand>
        <name>ATP</name>
        <dbReference type="ChEBI" id="CHEBI:30616"/>
    </ligand>
</feature>
<sequence>MPAKDVIFGDCARLRLMEGVNTLTDAVKVTLGPKGRNVVLERSYGSPAVTKDGVTVAKDIELRDRLQNMGAQMVKEVAAKTSDNAGDGTTTATVLAQSIVREGMRYVASGVNPMDIKRGIDQAVSSAVMELKKISRPCTTGKEIAQVGSVSANNDRTVGEMIAEAMNKVGKEGVITVEDGKSLADELEVVEGMQFDRGYLSPYFINNPDRQVAVLDSPFVLLCEKKVASIRDLLPIMERVAKAGRPLLIVAEDVEGEALATLVVNNARGILKAAAVKAPGFGDRRKAMLQDIAILTGGHVVSEETGLSLEKVSLPELGQAKRAEVAKDTTTIIDGAGDAKAINARIKHIRLQIEEAASDYDKEKLQERVAKLAGGVAVIRVGAATEVEMKEKKARVEDALHATRAAVEEGIVPGGGVALIRARNAISNLRCDNPDQDAGIRIVLRAMEEPLRQIVANGGEEASVVASSVASGKSISYGYNAAMRVYGDLMDAGVVDPTKVTRSALQNAASVAGLMLTTDVAVCDSPKREEAAPTQPVHGGVG</sequence>
<protein>
    <recommendedName>
        <fullName evidence="1">Chaperonin GroEL</fullName>
        <ecNumber evidence="1">5.6.1.7</ecNumber>
    </recommendedName>
    <alternativeName>
        <fullName evidence="1">60 kDa chaperonin</fullName>
    </alternativeName>
    <alternativeName>
        <fullName evidence="1">Chaperonin-60</fullName>
        <shortName evidence="1">Cpn60</shortName>
    </alternativeName>
</protein>
<comment type="function">
    <text evidence="1">Together with its co-chaperonin GroES, plays an essential role in assisting protein folding. The GroEL-GroES system forms a nano-cage that allows encapsulation of the non-native substrate proteins and provides a physical environment optimized to promote and accelerate protein folding.</text>
</comment>
<comment type="catalytic activity">
    <reaction evidence="1">
        <text>ATP + H2O + a folded polypeptide = ADP + phosphate + an unfolded polypeptide.</text>
        <dbReference type="EC" id="5.6.1.7"/>
    </reaction>
</comment>
<comment type="subunit">
    <text evidence="1">Forms a cylinder of 14 subunits composed of two heptameric rings stacked back-to-back. Interacts with the co-chaperonin GroES.</text>
</comment>
<comment type="subcellular location">
    <subcellularLocation>
        <location evidence="1">Cytoplasm</location>
    </subcellularLocation>
</comment>
<comment type="similarity">
    <text evidence="1">Belongs to the chaperonin (HSP60) family.</text>
</comment>
<reference key="1">
    <citation type="journal article" date="2002" name="Appl. Environ. Microbiol.">
        <title>The genetic properties of the primary endosymbionts of mealybugs differ from those of other endosymbionts of plant sap-sucking insects.</title>
        <authorList>
            <person name="Baumann L."/>
            <person name="Thao M.L."/>
            <person name="Hess J.M."/>
            <person name="Johnson M.W."/>
            <person name="Baumann P."/>
        </authorList>
    </citation>
    <scope>NUCLEOTIDE SEQUENCE [GENOMIC DNA]</scope>
</reference>
<organism>
    <name type="scientific">Tremblaya princeps</name>
    <dbReference type="NCBI Taxonomy" id="189385"/>
    <lineage>
        <taxon>Bacteria</taxon>
        <taxon>Pseudomonadati</taxon>
        <taxon>Pseudomonadota</taxon>
        <taxon>Betaproteobacteria</taxon>
        <taxon>Candidatus Tremblaya</taxon>
    </lineage>
</organism>
<keyword id="KW-0067">ATP-binding</keyword>
<keyword id="KW-0143">Chaperone</keyword>
<keyword id="KW-0963">Cytoplasm</keyword>
<keyword id="KW-0413">Isomerase</keyword>
<keyword id="KW-0547">Nucleotide-binding</keyword>